<accession>Q3L6W7</accession>
<evidence type="ECO:0000250" key="1">
    <source>
        <dbReference type="UniProtKB" id="P00403"/>
    </source>
</evidence>
<evidence type="ECO:0000250" key="2">
    <source>
        <dbReference type="UniProtKB" id="P00410"/>
    </source>
</evidence>
<evidence type="ECO:0000250" key="3">
    <source>
        <dbReference type="UniProtKB" id="P68530"/>
    </source>
</evidence>
<evidence type="ECO:0000305" key="4"/>
<geneLocation type="mitochondrion"/>
<gene>
    <name type="primary">MT-CO2</name>
    <name type="synonym">COII</name>
    <name type="synonym">COXII</name>
    <name type="synonym">MTCO2</name>
</gene>
<keyword id="KW-0186">Copper</keyword>
<keyword id="KW-0249">Electron transport</keyword>
<keyword id="KW-0460">Magnesium</keyword>
<keyword id="KW-0472">Membrane</keyword>
<keyword id="KW-0479">Metal-binding</keyword>
<keyword id="KW-0496">Mitochondrion</keyword>
<keyword id="KW-0999">Mitochondrion inner membrane</keyword>
<keyword id="KW-0679">Respiratory chain</keyword>
<keyword id="KW-1278">Translocase</keyword>
<keyword id="KW-0812">Transmembrane</keyword>
<keyword id="KW-1133">Transmembrane helix</keyword>
<keyword id="KW-0813">Transport</keyword>
<organism>
    <name type="scientific">Ailurus fulgens</name>
    <name type="common">Himalayan red panda</name>
    <dbReference type="NCBI Taxonomy" id="9649"/>
    <lineage>
        <taxon>Eukaryota</taxon>
        <taxon>Metazoa</taxon>
        <taxon>Chordata</taxon>
        <taxon>Craniata</taxon>
        <taxon>Vertebrata</taxon>
        <taxon>Euteleostomi</taxon>
        <taxon>Mammalia</taxon>
        <taxon>Eutheria</taxon>
        <taxon>Laurasiatheria</taxon>
        <taxon>Carnivora</taxon>
        <taxon>Caniformia</taxon>
        <taxon>Musteloidea</taxon>
        <taxon>Ailuridae</taxon>
        <taxon>Ailurus</taxon>
    </lineage>
</organism>
<name>COX2_AILFU</name>
<sequence length="227" mass="26001">MAYPFQMGLQDATSPIMEELLHFHDHTLMIVFLISSLVLYIISLMLTTKLTHTSTMDAQEVETIWTILPAIILILIALPSLRILYMMDEINNPSLTVKTMGHQWYWSYEYTDYEDLSFDSYMIPTQELKPGELRLLEVDNRVVLPMELTIRMLISSEDVLHSWAVPSLGLKTDAIPGRLNQTTLMAMRPGLYYGQCSEICGSNHSFMPIVLELVPLSHFEKWSASLL</sequence>
<protein>
    <recommendedName>
        <fullName>Cytochrome c oxidase subunit 2</fullName>
        <ecNumber>7.1.1.9</ecNumber>
    </recommendedName>
    <alternativeName>
        <fullName>Cytochrome c oxidase polypeptide II</fullName>
    </alternativeName>
</protein>
<feature type="chain" id="PRO_0000253987" description="Cytochrome c oxidase subunit 2">
    <location>
        <begin position="1"/>
        <end position="227"/>
    </location>
</feature>
<feature type="topological domain" description="Mitochondrial intermembrane" evidence="3">
    <location>
        <begin position="1"/>
        <end position="14"/>
    </location>
</feature>
<feature type="transmembrane region" description="Helical; Name=I" evidence="3">
    <location>
        <begin position="15"/>
        <end position="45"/>
    </location>
</feature>
<feature type="topological domain" description="Mitochondrial matrix" evidence="3">
    <location>
        <begin position="46"/>
        <end position="59"/>
    </location>
</feature>
<feature type="transmembrane region" description="Helical; Name=II" evidence="3">
    <location>
        <begin position="60"/>
        <end position="87"/>
    </location>
</feature>
<feature type="topological domain" description="Mitochondrial intermembrane" evidence="3">
    <location>
        <begin position="88"/>
        <end position="227"/>
    </location>
</feature>
<feature type="binding site" evidence="3">
    <location>
        <position position="161"/>
    </location>
    <ligand>
        <name>Cu cation</name>
        <dbReference type="ChEBI" id="CHEBI:23378"/>
        <label>A1</label>
    </ligand>
</feature>
<feature type="binding site" evidence="3">
    <location>
        <position position="196"/>
    </location>
    <ligand>
        <name>Cu cation</name>
        <dbReference type="ChEBI" id="CHEBI:23378"/>
        <label>A1</label>
    </ligand>
</feature>
<feature type="binding site" evidence="3">
    <location>
        <position position="196"/>
    </location>
    <ligand>
        <name>Cu cation</name>
        <dbReference type="ChEBI" id="CHEBI:23378"/>
        <label>A2</label>
    </ligand>
</feature>
<feature type="binding site" evidence="3">
    <location>
        <position position="198"/>
    </location>
    <ligand>
        <name>Cu cation</name>
        <dbReference type="ChEBI" id="CHEBI:23378"/>
        <label>A2</label>
    </ligand>
</feature>
<feature type="binding site" evidence="3">
    <location>
        <position position="198"/>
    </location>
    <ligand>
        <name>Mg(2+)</name>
        <dbReference type="ChEBI" id="CHEBI:18420"/>
        <note>ligand shared with MT-CO1</note>
    </ligand>
</feature>
<feature type="binding site" evidence="3">
    <location>
        <position position="200"/>
    </location>
    <ligand>
        <name>Cu cation</name>
        <dbReference type="ChEBI" id="CHEBI:23378"/>
        <label>A1</label>
    </ligand>
</feature>
<feature type="binding site" evidence="3">
    <location>
        <position position="200"/>
    </location>
    <ligand>
        <name>Cu cation</name>
        <dbReference type="ChEBI" id="CHEBI:23378"/>
        <label>A2</label>
    </ligand>
</feature>
<feature type="binding site" evidence="3">
    <location>
        <position position="204"/>
    </location>
    <ligand>
        <name>Cu cation</name>
        <dbReference type="ChEBI" id="CHEBI:23378"/>
        <label>A2</label>
    </ligand>
</feature>
<feature type="binding site" evidence="3">
    <location>
        <position position="207"/>
    </location>
    <ligand>
        <name>Cu cation</name>
        <dbReference type="ChEBI" id="CHEBI:23378"/>
        <label>A1</label>
    </ligand>
</feature>
<proteinExistence type="inferred from homology"/>
<dbReference type="EC" id="7.1.1.9"/>
<dbReference type="EMBL" id="AY598521">
    <property type="protein sequence ID" value="AAU00467.1"/>
    <property type="molecule type" value="Genomic_DNA"/>
</dbReference>
<dbReference type="SMR" id="Q3L6W7"/>
<dbReference type="GO" id="GO:0005743">
    <property type="term" value="C:mitochondrial inner membrane"/>
    <property type="evidence" value="ECO:0007669"/>
    <property type="project" value="UniProtKB-SubCell"/>
</dbReference>
<dbReference type="GO" id="GO:0045277">
    <property type="term" value="C:respiratory chain complex IV"/>
    <property type="evidence" value="ECO:0000250"/>
    <property type="project" value="UniProtKB"/>
</dbReference>
<dbReference type="GO" id="GO:0005507">
    <property type="term" value="F:copper ion binding"/>
    <property type="evidence" value="ECO:0007669"/>
    <property type="project" value="InterPro"/>
</dbReference>
<dbReference type="GO" id="GO:0004129">
    <property type="term" value="F:cytochrome-c oxidase activity"/>
    <property type="evidence" value="ECO:0007669"/>
    <property type="project" value="UniProtKB-EC"/>
</dbReference>
<dbReference type="GO" id="GO:0042773">
    <property type="term" value="P:ATP synthesis coupled electron transport"/>
    <property type="evidence" value="ECO:0007669"/>
    <property type="project" value="TreeGrafter"/>
</dbReference>
<dbReference type="CDD" id="cd13912">
    <property type="entry name" value="CcO_II_C"/>
    <property type="match status" value="1"/>
</dbReference>
<dbReference type="FunFam" id="1.10.287.90:FF:000001">
    <property type="entry name" value="Cytochrome c oxidase subunit 2"/>
    <property type="match status" value="1"/>
</dbReference>
<dbReference type="FunFam" id="2.60.40.420:FF:000001">
    <property type="entry name" value="Cytochrome c oxidase subunit 2"/>
    <property type="match status" value="1"/>
</dbReference>
<dbReference type="Gene3D" id="1.10.287.90">
    <property type="match status" value="1"/>
</dbReference>
<dbReference type="Gene3D" id="2.60.40.420">
    <property type="entry name" value="Cupredoxins - blue copper proteins"/>
    <property type="match status" value="1"/>
</dbReference>
<dbReference type="InterPro" id="IPR045187">
    <property type="entry name" value="CcO_II"/>
</dbReference>
<dbReference type="InterPro" id="IPR002429">
    <property type="entry name" value="CcO_II-like_C"/>
</dbReference>
<dbReference type="InterPro" id="IPR034210">
    <property type="entry name" value="CcO_II_C"/>
</dbReference>
<dbReference type="InterPro" id="IPR001505">
    <property type="entry name" value="Copper_CuA"/>
</dbReference>
<dbReference type="InterPro" id="IPR008972">
    <property type="entry name" value="Cupredoxin"/>
</dbReference>
<dbReference type="InterPro" id="IPR014222">
    <property type="entry name" value="Cyt_c_oxidase_su2"/>
</dbReference>
<dbReference type="InterPro" id="IPR011759">
    <property type="entry name" value="Cyt_c_oxidase_su2_TM_dom"/>
</dbReference>
<dbReference type="InterPro" id="IPR036257">
    <property type="entry name" value="Cyt_c_oxidase_su2_TM_sf"/>
</dbReference>
<dbReference type="NCBIfam" id="TIGR02866">
    <property type="entry name" value="CoxB"/>
    <property type="match status" value="1"/>
</dbReference>
<dbReference type="PANTHER" id="PTHR22888:SF9">
    <property type="entry name" value="CYTOCHROME C OXIDASE SUBUNIT 2"/>
    <property type="match status" value="1"/>
</dbReference>
<dbReference type="PANTHER" id="PTHR22888">
    <property type="entry name" value="CYTOCHROME C OXIDASE, SUBUNIT II"/>
    <property type="match status" value="1"/>
</dbReference>
<dbReference type="Pfam" id="PF00116">
    <property type="entry name" value="COX2"/>
    <property type="match status" value="1"/>
</dbReference>
<dbReference type="Pfam" id="PF02790">
    <property type="entry name" value="COX2_TM"/>
    <property type="match status" value="1"/>
</dbReference>
<dbReference type="PRINTS" id="PR01166">
    <property type="entry name" value="CYCOXIDASEII"/>
</dbReference>
<dbReference type="SUPFAM" id="SSF49503">
    <property type="entry name" value="Cupredoxins"/>
    <property type="match status" value="1"/>
</dbReference>
<dbReference type="SUPFAM" id="SSF81464">
    <property type="entry name" value="Cytochrome c oxidase subunit II-like, transmembrane region"/>
    <property type="match status" value="1"/>
</dbReference>
<dbReference type="PROSITE" id="PS00078">
    <property type="entry name" value="COX2"/>
    <property type="match status" value="1"/>
</dbReference>
<dbReference type="PROSITE" id="PS50857">
    <property type="entry name" value="COX2_CUA"/>
    <property type="match status" value="1"/>
</dbReference>
<dbReference type="PROSITE" id="PS50999">
    <property type="entry name" value="COX2_TM"/>
    <property type="match status" value="1"/>
</dbReference>
<reference key="1">
    <citation type="journal article" date="2005" name="Mol. Phylogenet. Evol.">
        <title>A phylogeny of the Caniformia (order Carnivora) based on 12 complete protein-coding mitochondrial genes.</title>
        <authorList>
            <person name="Delisle I."/>
            <person name="Strobeck C."/>
        </authorList>
    </citation>
    <scope>NUCLEOTIDE SEQUENCE [GENOMIC DNA]</scope>
</reference>
<comment type="function">
    <text evidence="2">Component of the cytochrome c oxidase, the last enzyme in the mitochondrial electron transport chain which drives oxidative phosphorylation. The respiratory chain contains 3 multisubunit complexes succinate dehydrogenase (complex II, CII), ubiquinol-cytochrome c oxidoreductase (cytochrome b-c1 complex, complex III, CIII) and cytochrome c oxidase (complex IV, CIV), that cooperate to transfer electrons derived from NADH and succinate to molecular oxygen, creating an electrochemical gradient over the inner membrane that drives transmembrane transport and the ATP synthase. Cytochrome c oxidase is the component of the respiratory chain that catalyzes the reduction of oxygen to water. Electrons originating from reduced cytochrome c in the intermembrane space (IMS) are transferred via the dinuclear copper A center (CU(A)) of subunit 2 and heme A of subunit 1 to the active site in subunit 1, a binuclear center (BNC) formed by heme A3 and copper B (CU(B)). The BNC reduces molecular oxygen to 2 water molecules using 4 electrons from cytochrome c in the IMS and 4 protons from the mitochondrial matrix.</text>
</comment>
<comment type="catalytic activity">
    <reaction evidence="2">
        <text>4 Fe(II)-[cytochrome c] + O2 + 8 H(+)(in) = 4 Fe(III)-[cytochrome c] + 2 H2O + 4 H(+)(out)</text>
        <dbReference type="Rhea" id="RHEA:11436"/>
        <dbReference type="Rhea" id="RHEA-COMP:10350"/>
        <dbReference type="Rhea" id="RHEA-COMP:14399"/>
        <dbReference type="ChEBI" id="CHEBI:15377"/>
        <dbReference type="ChEBI" id="CHEBI:15378"/>
        <dbReference type="ChEBI" id="CHEBI:15379"/>
        <dbReference type="ChEBI" id="CHEBI:29033"/>
        <dbReference type="ChEBI" id="CHEBI:29034"/>
        <dbReference type="EC" id="7.1.1.9"/>
    </reaction>
    <physiologicalReaction direction="left-to-right" evidence="2">
        <dbReference type="Rhea" id="RHEA:11437"/>
    </physiologicalReaction>
</comment>
<comment type="cofactor">
    <cofactor evidence="3">
        <name>Cu cation</name>
        <dbReference type="ChEBI" id="CHEBI:23378"/>
    </cofactor>
    <text evidence="3">Binds a dinuclear copper A center per subunit.</text>
</comment>
<comment type="subunit">
    <text evidence="1 3">Component of the cytochrome c oxidase (complex IV, CIV), a multisubunit enzyme composed of 14 subunits. The complex is composed of a catalytic core of 3 subunits MT-CO1, MT-CO2 and MT-CO3, encoded in the mitochondrial DNA, and 11 supernumerary subunits COX4I, COX5A, COX5B, COX6A, COX6B, COX6C, COX7A, COX7B, COX7C, COX8 and NDUFA4, which are encoded in the nuclear genome. The complex exists as a monomer or a dimer and forms supercomplexes (SCs) in the inner mitochondrial membrane with NADH-ubiquinone oxidoreductase (complex I, CI) and ubiquinol-cytochrome c oxidoreductase (cytochrome b-c1 complex, complex III, CIII), resulting in different assemblies (supercomplex SCI(1)III(2)IV(1) and megacomplex MCI(2)III(2)IV(2)) (By similarity). Found in a complex with TMEM177, COA6, COX18, COX20, SCO1 and SCO2. Interacts with TMEM177 in a COX20-dependent manner. Interacts with COX20. Interacts with COX16 (By similarity).</text>
</comment>
<comment type="subcellular location">
    <subcellularLocation>
        <location evidence="3">Mitochondrion inner membrane</location>
        <topology evidence="3">Multi-pass membrane protein</topology>
    </subcellularLocation>
</comment>
<comment type="similarity">
    <text evidence="4">Belongs to the cytochrome c oxidase subunit 2 family.</text>
</comment>